<evidence type="ECO:0000255" key="1">
    <source>
        <dbReference type="HAMAP-Rule" id="MF_00023"/>
    </source>
</evidence>
<evidence type="ECO:0000256" key="2">
    <source>
        <dbReference type="SAM" id="MobiDB-lite"/>
    </source>
</evidence>
<protein>
    <recommendedName>
        <fullName evidence="1">SsrA-binding protein</fullName>
    </recommendedName>
    <alternativeName>
        <fullName evidence="1">Small protein B</fullName>
    </alternativeName>
</protein>
<gene>
    <name evidence="1" type="primary">smpB</name>
    <name type="ordered locus">P9211_17411</name>
</gene>
<name>SSRP_PROM4</name>
<comment type="function">
    <text evidence="1">Required for rescue of stalled ribosomes mediated by trans-translation. Binds to transfer-messenger RNA (tmRNA), required for stable association of tmRNA with ribosomes. tmRNA and SmpB together mimic tRNA shape, replacing the anticodon stem-loop with SmpB. tmRNA is encoded by the ssrA gene; the 2 termini fold to resemble tRNA(Ala) and it encodes a 'tag peptide', a short internal open reading frame. During trans-translation Ala-aminoacylated tmRNA acts like a tRNA, entering the A-site of stalled ribosomes, displacing the stalled mRNA. The ribosome then switches to translate the ORF on the tmRNA; the nascent peptide is terminated with the 'tag peptide' encoded by the tmRNA and targeted for degradation. The ribosome is freed to recommence translation, which seems to be the essential function of trans-translation.</text>
</comment>
<comment type="subcellular location">
    <subcellularLocation>
        <location evidence="1">Cytoplasm</location>
    </subcellularLocation>
    <text evidence="1">The tmRNA-SmpB complex associates with stalled 70S ribosomes.</text>
</comment>
<comment type="similarity">
    <text evidence="1">Belongs to the SmpB family.</text>
</comment>
<reference key="1">
    <citation type="journal article" date="2007" name="PLoS Genet.">
        <title>Patterns and implications of gene gain and loss in the evolution of Prochlorococcus.</title>
        <authorList>
            <person name="Kettler G.C."/>
            <person name="Martiny A.C."/>
            <person name="Huang K."/>
            <person name="Zucker J."/>
            <person name="Coleman M.L."/>
            <person name="Rodrigue S."/>
            <person name="Chen F."/>
            <person name="Lapidus A."/>
            <person name="Ferriera S."/>
            <person name="Johnson J."/>
            <person name="Steglich C."/>
            <person name="Church G.M."/>
            <person name="Richardson P."/>
            <person name="Chisholm S.W."/>
        </authorList>
    </citation>
    <scope>NUCLEOTIDE SEQUENCE [LARGE SCALE GENOMIC DNA]</scope>
    <source>
        <strain>MIT 9211</strain>
    </source>
</reference>
<sequence length="166" mass="19142">MTKKKNKKVTKSERGEANRRLAENRLARHQYEILETLETGIELVGTEVKSIRAGNTNLRDGFCLIREGELQLHNVHISPLNNAGNFFNHDPLRTRKLLAHRKEINKLEIQVARKGLTLIPLSIHLKGSWIKIIIGVGKGRKLHDKREDDKRKQANRDMKSALARYR</sequence>
<organism>
    <name type="scientific">Prochlorococcus marinus (strain MIT 9211)</name>
    <dbReference type="NCBI Taxonomy" id="93059"/>
    <lineage>
        <taxon>Bacteria</taxon>
        <taxon>Bacillati</taxon>
        <taxon>Cyanobacteriota</taxon>
        <taxon>Cyanophyceae</taxon>
        <taxon>Synechococcales</taxon>
        <taxon>Prochlorococcaceae</taxon>
        <taxon>Prochlorococcus</taxon>
    </lineage>
</organism>
<dbReference type="EMBL" id="CP000878">
    <property type="protein sequence ID" value="ABX09672.1"/>
    <property type="molecule type" value="Genomic_DNA"/>
</dbReference>
<dbReference type="RefSeq" id="WP_012196292.1">
    <property type="nucleotide sequence ID" value="NC_009976.1"/>
</dbReference>
<dbReference type="SMR" id="A9BD59"/>
<dbReference type="STRING" id="93059.P9211_17411"/>
<dbReference type="KEGG" id="pmj:P9211_17411"/>
<dbReference type="eggNOG" id="COG0691">
    <property type="taxonomic scope" value="Bacteria"/>
</dbReference>
<dbReference type="HOGENOM" id="CLU_108953_0_1_3"/>
<dbReference type="OrthoDB" id="9805462at2"/>
<dbReference type="Proteomes" id="UP000000788">
    <property type="component" value="Chromosome"/>
</dbReference>
<dbReference type="GO" id="GO:0005829">
    <property type="term" value="C:cytosol"/>
    <property type="evidence" value="ECO:0007669"/>
    <property type="project" value="TreeGrafter"/>
</dbReference>
<dbReference type="GO" id="GO:0003723">
    <property type="term" value="F:RNA binding"/>
    <property type="evidence" value="ECO:0007669"/>
    <property type="project" value="UniProtKB-UniRule"/>
</dbReference>
<dbReference type="GO" id="GO:0070929">
    <property type="term" value="P:trans-translation"/>
    <property type="evidence" value="ECO:0007669"/>
    <property type="project" value="UniProtKB-UniRule"/>
</dbReference>
<dbReference type="CDD" id="cd09294">
    <property type="entry name" value="SmpB"/>
    <property type="match status" value="1"/>
</dbReference>
<dbReference type="Gene3D" id="2.40.280.10">
    <property type="match status" value="1"/>
</dbReference>
<dbReference type="HAMAP" id="MF_00023">
    <property type="entry name" value="SmpB"/>
    <property type="match status" value="1"/>
</dbReference>
<dbReference type="InterPro" id="IPR023620">
    <property type="entry name" value="SmpB"/>
</dbReference>
<dbReference type="InterPro" id="IPR000037">
    <property type="entry name" value="SsrA-bd_prot"/>
</dbReference>
<dbReference type="InterPro" id="IPR020081">
    <property type="entry name" value="SsrA-bd_prot_CS"/>
</dbReference>
<dbReference type="NCBIfam" id="NF003843">
    <property type="entry name" value="PRK05422.1"/>
    <property type="match status" value="1"/>
</dbReference>
<dbReference type="NCBIfam" id="TIGR00086">
    <property type="entry name" value="smpB"/>
    <property type="match status" value="1"/>
</dbReference>
<dbReference type="PANTHER" id="PTHR30308:SF2">
    <property type="entry name" value="SSRA-BINDING PROTEIN"/>
    <property type="match status" value="1"/>
</dbReference>
<dbReference type="PANTHER" id="PTHR30308">
    <property type="entry name" value="TMRNA-BINDING COMPONENT OF TRANS-TRANSLATION TAGGING COMPLEX"/>
    <property type="match status" value="1"/>
</dbReference>
<dbReference type="Pfam" id="PF01668">
    <property type="entry name" value="SmpB"/>
    <property type="match status" value="1"/>
</dbReference>
<dbReference type="SUPFAM" id="SSF74982">
    <property type="entry name" value="Small protein B (SmpB)"/>
    <property type="match status" value="1"/>
</dbReference>
<dbReference type="PROSITE" id="PS01317">
    <property type="entry name" value="SSRP"/>
    <property type="match status" value="1"/>
</dbReference>
<proteinExistence type="inferred from homology"/>
<keyword id="KW-0963">Cytoplasm</keyword>
<keyword id="KW-1185">Reference proteome</keyword>
<keyword id="KW-0694">RNA-binding</keyword>
<feature type="chain" id="PRO_1000090172" description="SsrA-binding protein">
    <location>
        <begin position="1"/>
        <end position="166"/>
    </location>
</feature>
<feature type="region of interest" description="Disordered" evidence="2">
    <location>
        <begin position="143"/>
        <end position="166"/>
    </location>
</feature>
<feature type="compositionally biased region" description="Basic and acidic residues" evidence="2">
    <location>
        <begin position="144"/>
        <end position="159"/>
    </location>
</feature>
<accession>A9BD59</accession>